<comment type="function">
    <text evidence="1">Catalyzes the reversible conversion of 2-phosphoglycerate (2-PG) into phosphoenolpyruvate (PEP). It is essential for the degradation of carbohydrates via glycolysis.</text>
</comment>
<comment type="catalytic activity">
    <reaction evidence="1">
        <text>(2R)-2-phosphoglycerate = phosphoenolpyruvate + H2O</text>
        <dbReference type="Rhea" id="RHEA:10164"/>
        <dbReference type="ChEBI" id="CHEBI:15377"/>
        <dbReference type="ChEBI" id="CHEBI:58289"/>
        <dbReference type="ChEBI" id="CHEBI:58702"/>
        <dbReference type="EC" id="4.2.1.11"/>
    </reaction>
</comment>
<comment type="cofactor">
    <cofactor evidence="1">
        <name>Mg(2+)</name>
        <dbReference type="ChEBI" id="CHEBI:18420"/>
    </cofactor>
    <text evidence="1">Binds a second Mg(2+) ion via substrate during catalysis.</text>
</comment>
<comment type="pathway">
    <text evidence="1">Carbohydrate degradation; glycolysis; pyruvate from D-glyceraldehyde 3-phosphate: step 4/5.</text>
</comment>
<comment type="subcellular location">
    <subcellularLocation>
        <location evidence="1">Cytoplasm</location>
    </subcellularLocation>
    <subcellularLocation>
        <location evidence="1">Secreted</location>
    </subcellularLocation>
    <subcellularLocation>
        <location evidence="1">Cell surface</location>
    </subcellularLocation>
    <text evidence="1">Fractions of enolase are present in both the cytoplasm and on the cell surface.</text>
</comment>
<comment type="similarity">
    <text evidence="1">Belongs to the enolase family.</text>
</comment>
<gene>
    <name evidence="1" type="primary">eno</name>
    <name type="ordered locus">LEPBI_I1704</name>
</gene>
<dbReference type="EC" id="4.2.1.11" evidence="1"/>
<dbReference type="EMBL" id="CP000786">
    <property type="protein sequence ID" value="ABZ97810.1"/>
    <property type="molecule type" value="Genomic_DNA"/>
</dbReference>
<dbReference type="RefSeq" id="WP_012388688.1">
    <property type="nucleotide sequence ID" value="NC_010602.1"/>
</dbReference>
<dbReference type="SMR" id="B0SRL5"/>
<dbReference type="STRING" id="456481.LEPBI_I1704"/>
<dbReference type="KEGG" id="lbi:LEPBI_I1704"/>
<dbReference type="HOGENOM" id="CLU_031223_2_1_12"/>
<dbReference type="OrthoDB" id="9804716at2"/>
<dbReference type="BioCyc" id="LBIF456481:LEPBI_RS08420-MONOMER"/>
<dbReference type="UniPathway" id="UPA00109">
    <property type="reaction ID" value="UER00187"/>
</dbReference>
<dbReference type="Proteomes" id="UP000001847">
    <property type="component" value="Chromosome I"/>
</dbReference>
<dbReference type="GO" id="GO:0009986">
    <property type="term" value="C:cell surface"/>
    <property type="evidence" value="ECO:0007669"/>
    <property type="project" value="UniProtKB-SubCell"/>
</dbReference>
<dbReference type="GO" id="GO:0005576">
    <property type="term" value="C:extracellular region"/>
    <property type="evidence" value="ECO:0007669"/>
    <property type="project" value="UniProtKB-SubCell"/>
</dbReference>
<dbReference type="GO" id="GO:0000015">
    <property type="term" value="C:phosphopyruvate hydratase complex"/>
    <property type="evidence" value="ECO:0007669"/>
    <property type="project" value="InterPro"/>
</dbReference>
<dbReference type="GO" id="GO:0000287">
    <property type="term" value="F:magnesium ion binding"/>
    <property type="evidence" value="ECO:0007669"/>
    <property type="project" value="UniProtKB-UniRule"/>
</dbReference>
<dbReference type="GO" id="GO:0004634">
    <property type="term" value="F:phosphopyruvate hydratase activity"/>
    <property type="evidence" value="ECO:0007669"/>
    <property type="project" value="UniProtKB-UniRule"/>
</dbReference>
<dbReference type="GO" id="GO:0006096">
    <property type="term" value="P:glycolytic process"/>
    <property type="evidence" value="ECO:0007669"/>
    <property type="project" value="UniProtKB-UniRule"/>
</dbReference>
<dbReference type="CDD" id="cd03313">
    <property type="entry name" value="enolase"/>
    <property type="match status" value="1"/>
</dbReference>
<dbReference type="FunFam" id="3.20.20.120:FF:000001">
    <property type="entry name" value="Enolase"/>
    <property type="match status" value="1"/>
</dbReference>
<dbReference type="FunFam" id="3.30.390.10:FF:000001">
    <property type="entry name" value="Enolase"/>
    <property type="match status" value="1"/>
</dbReference>
<dbReference type="Gene3D" id="3.20.20.120">
    <property type="entry name" value="Enolase-like C-terminal domain"/>
    <property type="match status" value="1"/>
</dbReference>
<dbReference type="Gene3D" id="3.30.390.10">
    <property type="entry name" value="Enolase-like, N-terminal domain"/>
    <property type="match status" value="1"/>
</dbReference>
<dbReference type="HAMAP" id="MF_00318">
    <property type="entry name" value="Enolase"/>
    <property type="match status" value="1"/>
</dbReference>
<dbReference type="InterPro" id="IPR000941">
    <property type="entry name" value="Enolase"/>
</dbReference>
<dbReference type="InterPro" id="IPR036849">
    <property type="entry name" value="Enolase-like_C_sf"/>
</dbReference>
<dbReference type="InterPro" id="IPR029017">
    <property type="entry name" value="Enolase-like_N"/>
</dbReference>
<dbReference type="InterPro" id="IPR020810">
    <property type="entry name" value="Enolase_C"/>
</dbReference>
<dbReference type="InterPro" id="IPR020809">
    <property type="entry name" value="Enolase_CS"/>
</dbReference>
<dbReference type="InterPro" id="IPR020811">
    <property type="entry name" value="Enolase_N"/>
</dbReference>
<dbReference type="NCBIfam" id="TIGR01060">
    <property type="entry name" value="eno"/>
    <property type="match status" value="1"/>
</dbReference>
<dbReference type="PANTHER" id="PTHR11902">
    <property type="entry name" value="ENOLASE"/>
    <property type="match status" value="1"/>
</dbReference>
<dbReference type="PANTHER" id="PTHR11902:SF1">
    <property type="entry name" value="ENOLASE"/>
    <property type="match status" value="1"/>
</dbReference>
<dbReference type="Pfam" id="PF00113">
    <property type="entry name" value="Enolase_C"/>
    <property type="match status" value="1"/>
</dbReference>
<dbReference type="Pfam" id="PF03952">
    <property type="entry name" value="Enolase_N"/>
    <property type="match status" value="1"/>
</dbReference>
<dbReference type="PIRSF" id="PIRSF001400">
    <property type="entry name" value="Enolase"/>
    <property type="match status" value="1"/>
</dbReference>
<dbReference type="PRINTS" id="PR00148">
    <property type="entry name" value="ENOLASE"/>
</dbReference>
<dbReference type="SFLD" id="SFLDF00002">
    <property type="entry name" value="enolase"/>
    <property type="match status" value="1"/>
</dbReference>
<dbReference type="SFLD" id="SFLDG00178">
    <property type="entry name" value="enolase"/>
    <property type="match status" value="1"/>
</dbReference>
<dbReference type="SMART" id="SM01192">
    <property type="entry name" value="Enolase_C"/>
    <property type="match status" value="1"/>
</dbReference>
<dbReference type="SMART" id="SM01193">
    <property type="entry name" value="Enolase_N"/>
    <property type="match status" value="1"/>
</dbReference>
<dbReference type="SUPFAM" id="SSF51604">
    <property type="entry name" value="Enolase C-terminal domain-like"/>
    <property type="match status" value="1"/>
</dbReference>
<dbReference type="SUPFAM" id="SSF54826">
    <property type="entry name" value="Enolase N-terminal domain-like"/>
    <property type="match status" value="1"/>
</dbReference>
<dbReference type="PROSITE" id="PS00164">
    <property type="entry name" value="ENOLASE"/>
    <property type="match status" value="1"/>
</dbReference>
<organism>
    <name type="scientific">Leptospira biflexa serovar Patoc (strain Patoc 1 / ATCC 23582 / Paris)</name>
    <dbReference type="NCBI Taxonomy" id="456481"/>
    <lineage>
        <taxon>Bacteria</taxon>
        <taxon>Pseudomonadati</taxon>
        <taxon>Spirochaetota</taxon>
        <taxon>Spirochaetia</taxon>
        <taxon>Leptospirales</taxon>
        <taxon>Leptospiraceae</taxon>
        <taxon>Leptospira</taxon>
    </lineage>
</organism>
<feature type="chain" id="PRO_1000115879" description="Enolase">
    <location>
        <begin position="1"/>
        <end position="433"/>
    </location>
</feature>
<feature type="region of interest" description="Disordered" evidence="2">
    <location>
        <begin position="37"/>
        <end position="59"/>
    </location>
</feature>
<feature type="compositionally biased region" description="Basic and acidic residues" evidence="2">
    <location>
        <begin position="47"/>
        <end position="59"/>
    </location>
</feature>
<feature type="active site" description="Proton donor" evidence="1">
    <location>
        <position position="208"/>
    </location>
</feature>
<feature type="active site" description="Proton acceptor" evidence="1">
    <location>
        <position position="343"/>
    </location>
</feature>
<feature type="binding site" evidence="1">
    <location>
        <position position="166"/>
    </location>
    <ligand>
        <name>(2R)-2-phosphoglycerate</name>
        <dbReference type="ChEBI" id="CHEBI:58289"/>
    </ligand>
</feature>
<feature type="binding site" evidence="1">
    <location>
        <position position="245"/>
    </location>
    <ligand>
        <name>Mg(2+)</name>
        <dbReference type="ChEBI" id="CHEBI:18420"/>
    </ligand>
</feature>
<feature type="binding site" evidence="1">
    <location>
        <position position="291"/>
    </location>
    <ligand>
        <name>Mg(2+)</name>
        <dbReference type="ChEBI" id="CHEBI:18420"/>
    </ligand>
</feature>
<feature type="binding site" evidence="1">
    <location>
        <position position="318"/>
    </location>
    <ligand>
        <name>Mg(2+)</name>
        <dbReference type="ChEBI" id="CHEBI:18420"/>
    </ligand>
</feature>
<feature type="binding site" evidence="1">
    <location>
        <position position="343"/>
    </location>
    <ligand>
        <name>(2R)-2-phosphoglycerate</name>
        <dbReference type="ChEBI" id="CHEBI:58289"/>
    </ligand>
</feature>
<feature type="binding site" evidence="1">
    <location>
        <position position="372"/>
    </location>
    <ligand>
        <name>(2R)-2-phosphoglycerate</name>
        <dbReference type="ChEBI" id="CHEBI:58289"/>
    </ligand>
</feature>
<feature type="binding site" evidence="1">
    <location>
        <position position="373"/>
    </location>
    <ligand>
        <name>(2R)-2-phosphoglycerate</name>
        <dbReference type="ChEBI" id="CHEBI:58289"/>
    </ligand>
</feature>
<feature type="binding site" evidence="1">
    <location>
        <position position="394"/>
    </location>
    <ligand>
        <name>(2R)-2-phosphoglycerate</name>
        <dbReference type="ChEBI" id="CHEBI:58289"/>
    </ligand>
</feature>
<evidence type="ECO:0000255" key="1">
    <source>
        <dbReference type="HAMAP-Rule" id="MF_00318"/>
    </source>
</evidence>
<evidence type="ECO:0000256" key="2">
    <source>
        <dbReference type="SAM" id="MobiDB-lite"/>
    </source>
</evidence>
<accession>B0SRL5</accession>
<reference key="1">
    <citation type="journal article" date="2008" name="PLoS ONE">
        <title>Genome sequence of the saprophyte Leptospira biflexa provides insights into the evolution of Leptospira and the pathogenesis of leptospirosis.</title>
        <authorList>
            <person name="Picardeau M."/>
            <person name="Bulach D.M."/>
            <person name="Bouchier C."/>
            <person name="Zuerner R.L."/>
            <person name="Zidane N."/>
            <person name="Wilson P.J."/>
            <person name="Creno S."/>
            <person name="Kuczek E.S."/>
            <person name="Bommezzadri S."/>
            <person name="Davis J.C."/>
            <person name="McGrath A."/>
            <person name="Johnson M.J."/>
            <person name="Boursaux-Eude C."/>
            <person name="Seemann T."/>
            <person name="Rouy Z."/>
            <person name="Coppel R.L."/>
            <person name="Rood J.I."/>
            <person name="Lajus A."/>
            <person name="Davies J.K."/>
            <person name="Medigue C."/>
            <person name="Adler B."/>
        </authorList>
    </citation>
    <scope>NUCLEOTIDE SEQUENCE [LARGE SCALE GENOMIC DNA]</scope>
    <source>
        <strain>Patoc 1 / ATCC 23582 / Paris</strain>
    </source>
</reference>
<sequence>MSQKDSIRSVRAREIMDSRGNPTVEVDVTLEDGSFGRAAVPSGASTGEHEAVELRDGDKKRYGGKGVQKAVDNVNAKISKSILGLSATDQLQIDGTMIALDGTANKSKLGANAILGVSMAVAKAAAVHAGLPLYRYIGGTFARELPVPMMNIINGGAHADNNIDFQEFMILPVSAPNFKEALRMGAEVFHSLKTVLKGKGLNTAVGDEGGFAPNLTSNSEAIEVILTAIEKAGYKPDLDIKIGLDCAASEFYDEKKKKYILKAEKKPEKTAEELVEYYSNLVSKYPIITMEDGLDENDWSGWKKLSEKLGKKIQLVGDDLFVTNIKKLAQGIDKGIGNSILIKVNQIGSLTETLSAIEMAKKAQYTAVVSHRSGETEDATISHIAVATNSGQIKTGSLSRTDRIAKYNELLRIEEELGKNATYSGVNTFYNLR</sequence>
<keyword id="KW-0963">Cytoplasm</keyword>
<keyword id="KW-0324">Glycolysis</keyword>
<keyword id="KW-0456">Lyase</keyword>
<keyword id="KW-0460">Magnesium</keyword>
<keyword id="KW-0479">Metal-binding</keyword>
<keyword id="KW-1185">Reference proteome</keyword>
<keyword id="KW-0964">Secreted</keyword>
<name>ENO_LEPBP</name>
<proteinExistence type="inferred from homology"/>
<protein>
    <recommendedName>
        <fullName evidence="1">Enolase</fullName>
        <ecNumber evidence="1">4.2.1.11</ecNumber>
    </recommendedName>
    <alternativeName>
        <fullName evidence="1">2-phospho-D-glycerate hydro-lyase</fullName>
    </alternativeName>
    <alternativeName>
        <fullName evidence="1">2-phosphoglycerate dehydratase</fullName>
    </alternativeName>
</protein>